<name>CRVP7_VARAC</name>
<proteinExistence type="evidence at transcript level"/>
<reference key="1">
    <citation type="journal article" date="2006" name="Nature">
        <title>Early evolution of the venom system in lizards and snakes.</title>
        <authorList>
            <person name="Fry B.G."/>
            <person name="Vidal N."/>
            <person name="Norman J.A."/>
            <person name="Vonk F.J."/>
            <person name="Scheib H."/>
            <person name="Ramjan S.F.R."/>
            <person name="Kuruppu S."/>
            <person name="Fung K."/>
            <person name="Blair Hedges S."/>
            <person name="Richardson M.K."/>
            <person name="Hodgson W.C."/>
            <person name="Ignjatovic V."/>
            <person name="Summerhayes R."/>
            <person name="Kochva E."/>
        </authorList>
    </citation>
    <scope>NUCLEOTIDE SEQUENCE [LARGE SCALE MRNA]</scope>
    <source>
        <tissue>Venom gland</tissue>
    </source>
</reference>
<accession>Q2XXQ8</accession>
<organism>
    <name type="scientific">Varanus acanthurus</name>
    <name type="common">Ridge-tailed monitor</name>
    <dbReference type="NCBI Taxonomy" id="62035"/>
    <lineage>
        <taxon>Eukaryota</taxon>
        <taxon>Metazoa</taxon>
        <taxon>Chordata</taxon>
        <taxon>Craniata</taxon>
        <taxon>Vertebrata</taxon>
        <taxon>Euteleostomi</taxon>
        <taxon>Lepidosauria</taxon>
        <taxon>Squamata</taxon>
        <taxon>Bifurcata</taxon>
        <taxon>Unidentata</taxon>
        <taxon>Episquamata</taxon>
        <taxon>Toxicofera</taxon>
        <taxon>Anguimorpha</taxon>
        <taxon>Paleoanguimorpha</taxon>
        <taxon>Varanoidea</taxon>
        <taxon>Varanidae</taxon>
        <taxon>Varanus</taxon>
    </lineage>
</organism>
<keyword id="KW-0108">Calcium channel impairing toxin</keyword>
<keyword id="KW-1015">Disulfide bond</keyword>
<keyword id="KW-0872">Ion channel impairing toxin</keyword>
<keyword id="KW-0528">Neurotoxin</keyword>
<keyword id="KW-0632">Potassium channel impairing toxin</keyword>
<keyword id="KW-0964">Secreted</keyword>
<keyword id="KW-0732">Signal</keyword>
<keyword id="KW-0800">Toxin</keyword>
<feature type="signal peptide" evidence="2">
    <location>
        <begin position="1"/>
        <end position="22"/>
    </location>
</feature>
<feature type="chain" id="PRO_0000380658" description="Cysteine-rich venom protein VAR7">
    <location>
        <begin position="23"/>
        <end position="158" status="greater than"/>
    </location>
</feature>
<feature type="domain" description="SCP">
    <location>
        <begin position="41"/>
        <end position="158"/>
    </location>
</feature>
<feature type="disulfide bond" evidence="1">
    <location>
        <begin position="77"/>
        <end position="156"/>
    </location>
</feature>
<feature type="non-terminal residue">
    <location>
        <position position="158"/>
    </location>
</feature>
<evidence type="ECO:0000250" key="1"/>
<evidence type="ECO:0000255" key="2"/>
<evidence type="ECO:0000305" key="3"/>
<sequence length="158" mass="17936">MILLKLYLTLAAILCQSRGTTSLDLDDLMTTNPEIQNEIINKHNDLRRTVDPPAKNMLKMSWDNTIAESAKRAALRCNQNEHTPVSGRTIGGVVCGENYFMSSNLRTWSFGIQSWFDERNYFKFGFGPTRAGVMVGHYTQVVWYKSYKMGCAINLCPN</sequence>
<comment type="function">
    <text evidence="1">Blocks ryanodine receptors, and potassium channels.</text>
</comment>
<comment type="subcellular location">
    <subcellularLocation>
        <location evidence="1">Secreted</location>
    </subcellularLocation>
</comment>
<comment type="tissue specificity">
    <text>Expressed by the venom gland.</text>
</comment>
<comment type="PTM">
    <text evidence="1">Contains 8 disulfide bonds.</text>
</comment>
<comment type="similarity">
    <text evidence="3">Belongs to the CRISP family.</text>
</comment>
<protein>
    <recommendedName>
        <fullName>Cysteine-rich venom protein VAR7</fullName>
        <shortName>CRVP</shortName>
    </recommendedName>
    <alternativeName>
        <fullName>Cysteine-rich secretory protein VAR7</fullName>
        <shortName>CRISP-VAR7</shortName>
    </alternativeName>
</protein>
<dbReference type="EMBL" id="DQ139887">
    <property type="protein sequence ID" value="AAZ75593.1"/>
    <property type="molecule type" value="mRNA"/>
</dbReference>
<dbReference type="SMR" id="Q2XXQ8"/>
<dbReference type="GO" id="GO:0005576">
    <property type="term" value="C:extracellular region"/>
    <property type="evidence" value="ECO:0007669"/>
    <property type="project" value="UniProtKB-SubCell"/>
</dbReference>
<dbReference type="GO" id="GO:0005246">
    <property type="term" value="F:calcium channel regulator activity"/>
    <property type="evidence" value="ECO:0007669"/>
    <property type="project" value="UniProtKB-KW"/>
</dbReference>
<dbReference type="GO" id="GO:0015459">
    <property type="term" value="F:potassium channel regulator activity"/>
    <property type="evidence" value="ECO:0007669"/>
    <property type="project" value="UniProtKB-KW"/>
</dbReference>
<dbReference type="GO" id="GO:0090729">
    <property type="term" value="F:toxin activity"/>
    <property type="evidence" value="ECO:0007669"/>
    <property type="project" value="UniProtKB-KW"/>
</dbReference>
<dbReference type="CDD" id="cd05383">
    <property type="entry name" value="CAP_CRISP"/>
    <property type="match status" value="1"/>
</dbReference>
<dbReference type="Gene3D" id="3.40.33.10">
    <property type="entry name" value="CAP"/>
    <property type="match status" value="1"/>
</dbReference>
<dbReference type="InterPro" id="IPR018244">
    <property type="entry name" value="Allrgn_V5/Tpx1_CS"/>
</dbReference>
<dbReference type="InterPro" id="IPR014044">
    <property type="entry name" value="CAP_dom"/>
</dbReference>
<dbReference type="InterPro" id="IPR035940">
    <property type="entry name" value="CAP_sf"/>
</dbReference>
<dbReference type="InterPro" id="IPR001283">
    <property type="entry name" value="CRISP-related"/>
</dbReference>
<dbReference type="InterPro" id="IPR034117">
    <property type="entry name" value="SCP_CRISP"/>
</dbReference>
<dbReference type="InterPro" id="IPR002413">
    <property type="entry name" value="V5_allergen-like"/>
</dbReference>
<dbReference type="PANTHER" id="PTHR10334">
    <property type="entry name" value="CYSTEINE-RICH SECRETORY PROTEIN-RELATED"/>
    <property type="match status" value="1"/>
</dbReference>
<dbReference type="Pfam" id="PF00188">
    <property type="entry name" value="CAP"/>
    <property type="match status" value="1"/>
</dbReference>
<dbReference type="PRINTS" id="PR00838">
    <property type="entry name" value="V5ALLERGEN"/>
</dbReference>
<dbReference type="PRINTS" id="PR00837">
    <property type="entry name" value="V5TPXLIKE"/>
</dbReference>
<dbReference type="SMART" id="SM00198">
    <property type="entry name" value="SCP"/>
    <property type="match status" value="1"/>
</dbReference>
<dbReference type="SUPFAM" id="SSF55797">
    <property type="entry name" value="PR-1-like"/>
    <property type="match status" value="1"/>
</dbReference>
<dbReference type="PROSITE" id="PS01009">
    <property type="entry name" value="CRISP_1"/>
    <property type="match status" value="1"/>
</dbReference>